<protein>
    <recommendedName>
        <fullName evidence="1">Phosphoheptose isomerase</fullName>
        <ecNumber evidence="1">5.3.1.28</ecNumber>
    </recommendedName>
    <alternativeName>
        <fullName evidence="1">Sedoheptulose 7-phosphate isomerase</fullName>
    </alternativeName>
</protein>
<reference key="1">
    <citation type="journal article" date="2003" name="Science">
        <title>Genome of Geobacter sulfurreducens: metal reduction in subsurface environments.</title>
        <authorList>
            <person name="Methe B.A."/>
            <person name="Nelson K.E."/>
            <person name="Eisen J.A."/>
            <person name="Paulsen I.T."/>
            <person name="Nelson W.C."/>
            <person name="Heidelberg J.F."/>
            <person name="Wu D."/>
            <person name="Wu M."/>
            <person name="Ward N.L."/>
            <person name="Beanan M.J."/>
            <person name="Dodson R.J."/>
            <person name="Madupu R."/>
            <person name="Brinkac L.M."/>
            <person name="Daugherty S.C."/>
            <person name="DeBoy R.T."/>
            <person name="Durkin A.S."/>
            <person name="Gwinn M.L."/>
            <person name="Kolonay J.F."/>
            <person name="Sullivan S.A."/>
            <person name="Haft D.H."/>
            <person name="Selengut J."/>
            <person name="Davidsen T.M."/>
            <person name="Zafar N."/>
            <person name="White O."/>
            <person name="Tran B."/>
            <person name="Romero C."/>
            <person name="Forberger H.A."/>
            <person name="Weidman J.F."/>
            <person name="Khouri H.M."/>
            <person name="Feldblyum T.V."/>
            <person name="Utterback T.R."/>
            <person name="Van Aken S.E."/>
            <person name="Lovley D.R."/>
            <person name="Fraser C.M."/>
        </authorList>
    </citation>
    <scope>NUCLEOTIDE SEQUENCE [LARGE SCALE GENOMIC DNA]</scope>
    <source>
        <strain>ATCC 51573 / DSM 12127 / PCA</strain>
    </source>
</reference>
<comment type="function">
    <text evidence="1">Catalyzes the isomerization of sedoheptulose 7-phosphate in D-glycero-D-manno-heptose 7-phosphate.</text>
</comment>
<comment type="catalytic activity">
    <reaction evidence="1">
        <text>2 D-sedoheptulose 7-phosphate = D-glycero-alpha-D-manno-heptose 7-phosphate + D-glycero-beta-D-manno-heptose 7-phosphate</text>
        <dbReference type="Rhea" id="RHEA:27489"/>
        <dbReference type="ChEBI" id="CHEBI:57483"/>
        <dbReference type="ChEBI" id="CHEBI:60203"/>
        <dbReference type="ChEBI" id="CHEBI:60204"/>
        <dbReference type="EC" id="5.3.1.28"/>
    </reaction>
</comment>
<comment type="cofactor">
    <cofactor evidence="1">
        <name>Zn(2+)</name>
        <dbReference type="ChEBI" id="CHEBI:29105"/>
    </cofactor>
    <text evidence="1">Binds 1 zinc ion per subunit.</text>
</comment>
<comment type="pathway">
    <text evidence="1">Carbohydrate biosynthesis; D-glycero-D-manno-heptose 7-phosphate biosynthesis; D-glycero-alpha-D-manno-heptose 7-phosphate and D-glycero-beta-D-manno-heptose 7-phosphate from sedoheptulose 7-phosphate: step 1/1.</text>
</comment>
<comment type="subunit">
    <text evidence="1">Homotetramer.</text>
</comment>
<comment type="subcellular location">
    <subcellularLocation>
        <location evidence="1">Cytoplasm</location>
    </subcellularLocation>
</comment>
<comment type="miscellaneous">
    <text evidence="1">The reaction produces a racemic mixture of D-glycero-alpha-D-manno-heptose 7-phosphate and D-glycero-beta-D-manno-heptose 7-phosphate.</text>
</comment>
<comment type="similarity">
    <text evidence="1">Belongs to the SIS family. GmhA subfamily.</text>
</comment>
<organism>
    <name type="scientific">Geobacter sulfurreducens (strain ATCC 51573 / DSM 12127 / PCA)</name>
    <dbReference type="NCBI Taxonomy" id="243231"/>
    <lineage>
        <taxon>Bacteria</taxon>
        <taxon>Pseudomonadati</taxon>
        <taxon>Thermodesulfobacteriota</taxon>
        <taxon>Desulfuromonadia</taxon>
        <taxon>Geobacterales</taxon>
        <taxon>Geobacteraceae</taxon>
        <taxon>Geobacter</taxon>
    </lineage>
</organism>
<proteinExistence type="inferred from homology"/>
<gene>
    <name evidence="1" type="primary">gmhA</name>
    <name type="ordered locus">GSU2087</name>
</gene>
<sequence>MIDDITAQLRAGRQVLEALERELAGRIASFAELLADSLAGGRKLLVMGNGGSAADAQHFAAEIVGRFKLERRGLPAVALTTDTSILTAIGNDYGFDAIFRRQVEALADEGDVVVGISTSGNSRNVQEALLLARERGCRTIGLLGRDGGSIRDIVDLDLTVPSADTPRIQEGHITIIHIVCDLVEKRLFP</sequence>
<dbReference type="EC" id="5.3.1.28" evidence="1"/>
<dbReference type="EMBL" id="AE017180">
    <property type="protein sequence ID" value="AAR35463.1"/>
    <property type="molecule type" value="Genomic_DNA"/>
</dbReference>
<dbReference type="RefSeq" id="NP_953136.1">
    <property type="nucleotide sequence ID" value="NC_002939.5"/>
</dbReference>
<dbReference type="RefSeq" id="WP_010942729.1">
    <property type="nucleotide sequence ID" value="NC_002939.5"/>
</dbReference>
<dbReference type="SMR" id="Q74BF4"/>
<dbReference type="FunCoup" id="Q74BF4">
    <property type="interactions" value="169"/>
</dbReference>
<dbReference type="STRING" id="243231.GSU2087"/>
<dbReference type="EnsemblBacteria" id="AAR35463">
    <property type="protein sequence ID" value="AAR35463"/>
    <property type="gene ID" value="GSU2087"/>
</dbReference>
<dbReference type="KEGG" id="gsu:GSU2087"/>
<dbReference type="PATRIC" id="fig|243231.5.peg.2123"/>
<dbReference type="eggNOG" id="COG0279">
    <property type="taxonomic scope" value="Bacteria"/>
</dbReference>
<dbReference type="HOGENOM" id="CLU_080999_4_0_7"/>
<dbReference type="InParanoid" id="Q74BF4"/>
<dbReference type="OrthoDB" id="9810929at2"/>
<dbReference type="UniPathway" id="UPA00041">
    <property type="reaction ID" value="UER00436"/>
</dbReference>
<dbReference type="Proteomes" id="UP000000577">
    <property type="component" value="Chromosome"/>
</dbReference>
<dbReference type="GO" id="GO:0005737">
    <property type="term" value="C:cytoplasm"/>
    <property type="evidence" value="ECO:0007669"/>
    <property type="project" value="UniProtKB-SubCell"/>
</dbReference>
<dbReference type="GO" id="GO:1990102">
    <property type="term" value="C:DnaA-DiaA complex"/>
    <property type="evidence" value="ECO:0000318"/>
    <property type="project" value="GO_Central"/>
</dbReference>
<dbReference type="GO" id="GO:0097367">
    <property type="term" value="F:carbohydrate derivative binding"/>
    <property type="evidence" value="ECO:0007669"/>
    <property type="project" value="InterPro"/>
</dbReference>
<dbReference type="GO" id="GO:0008968">
    <property type="term" value="F:D-sedoheptulose 7-phosphate isomerase activity"/>
    <property type="evidence" value="ECO:0007669"/>
    <property type="project" value="UniProtKB-UniRule"/>
</dbReference>
<dbReference type="GO" id="GO:0008270">
    <property type="term" value="F:zinc ion binding"/>
    <property type="evidence" value="ECO:0007669"/>
    <property type="project" value="UniProtKB-UniRule"/>
</dbReference>
<dbReference type="GO" id="GO:0005975">
    <property type="term" value="P:carbohydrate metabolic process"/>
    <property type="evidence" value="ECO:0007669"/>
    <property type="project" value="UniProtKB-UniRule"/>
</dbReference>
<dbReference type="GO" id="GO:2001061">
    <property type="term" value="P:D-glycero-D-manno-heptose 7-phosphate biosynthetic process"/>
    <property type="evidence" value="ECO:0007669"/>
    <property type="project" value="UniProtKB-UniPathway"/>
</dbReference>
<dbReference type="GO" id="GO:0032298">
    <property type="term" value="P:positive regulation of DNA-templated DNA replication initiation"/>
    <property type="evidence" value="ECO:0000318"/>
    <property type="project" value="GO_Central"/>
</dbReference>
<dbReference type="CDD" id="cd05006">
    <property type="entry name" value="SIS_GmhA"/>
    <property type="match status" value="1"/>
</dbReference>
<dbReference type="Gene3D" id="3.40.50.10490">
    <property type="entry name" value="Glucose-6-phosphate isomerase like protein, domain 1"/>
    <property type="match status" value="1"/>
</dbReference>
<dbReference type="HAMAP" id="MF_00067">
    <property type="entry name" value="GmhA"/>
    <property type="match status" value="1"/>
</dbReference>
<dbReference type="InterPro" id="IPR035461">
    <property type="entry name" value="GmhA/DiaA"/>
</dbReference>
<dbReference type="InterPro" id="IPR004515">
    <property type="entry name" value="Phosphoheptose_Isoase"/>
</dbReference>
<dbReference type="InterPro" id="IPR001347">
    <property type="entry name" value="SIS_dom"/>
</dbReference>
<dbReference type="InterPro" id="IPR046348">
    <property type="entry name" value="SIS_dom_sf"/>
</dbReference>
<dbReference type="InterPro" id="IPR050099">
    <property type="entry name" value="SIS_GmhA/DiaA_subfam"/>
</dbReference>
<dbReference type="NCBIfam" id="TIGR00441">
    <property type="entry name" value="gmhA"/>
    <property type="match status" value="1"/>
</dbReference>
<dbReference type="PANTHER" id="PTHR30390:SF6">
    <property type="entry name" value="DNAA INITIATOR-ASSOCIATING PROTEIN DIAA"/>
    <property type="match status" value="1"/>
</dbReference>
<dbReference type="PANTHER" id="PTHR30390">
    <property type="entry name" value="SEDOHEPTULOSE 7-PHOSPHATE ISOMERASE / DNAA INITIATOR-ASSOCIATING FACTOR FOR REPLICATION INITIATION"/>
    <property type="match status" value="1"/>
</dbReference>
<dbReference type="Pfam" id="PF13580">
    <property type="entry name" value="SIS_2"/>
    <property type="match status" value="1"/>
</dbReference>
<dbReference type="SUPFAM" id="SSF53697">
    <property type="entry name" value="SIS domain"/>
    <property type="match status" value="1"/>
</dbReference>
<dbReference type="PROSITE" id="PS51464">
    <property type="entry name" value="SIS"/>
    <property type="match status" value="1"/>
</dbReference>
<keyword id="KW-0119">Carbohydrate metabolism</keyword>
<keyword id="KW-0963">Cytoplasm</keyword>
<keyword id="KW-0413">Isomerase</keyword>
<keyword id="KW-0479">Metal-binding</keyword>
<keyword id="KW-1185">Reference proteome</keyword>
<keyword id="KW-0862">Zinc</keyword>
<feature type="chain" id="PRO_1000009067" description="Phosphoheptose isomerase">
    <location>
        <begin position="1"/>
        <end position="189"/>
    </location>
</feature>
<feature type="domain" description="SIS" evidence="1">
    <location>
        <begin position="34"/>
        <end position="189"/>
    </location>
</feature>
<feature type="binding site" evidence="1">
    <location>
        <begin position="49"/>
        <end position="51"/>
    </location>
    <ligand>
        <name>substrate</name>
    </ligand>
</feature>
<feature type="binding site" evidence="1">
    <location>
        <position position="58"/>
    </location>
    <ligand>
        <name>Zn(2+)</name>
        <dbReference type="ChEBI" id="CHEBI:29105"/>
    </ligand>
</feature>
<feature type="binding site" evidence="1">
    <location>
        <position position="62"/>
    </location>
    <ligand>
        <name>substrate</name>
    </ligand>
</feature>
<feature type="binding site" evidence="1">
    <location>
        <position position="62"/>
    </location>
    <ligand>
        <name>Zn(2+)</name>
        <dbReference type="ChEBI" id="CHEBI:29105"/>
    </ligand>
</feature>
<feature type="binding site" evidence="1">
    <location>
        <begin position="91"/>
        <end position="92"/>
    </location>
    <ligand>
        <name>substrate</name>
    </ligand>
</feature>
<feature type="binding site" evidence="1">
    <location>
        <begin position="117"/>
        <end position="119"/>
    </location>
    <ligand>
        <name>substrate</name>
    </ligand>
</feature>
<feature type="binding site" evidence="1">
    <location>
        <position position="122"/>
    </location>
    <ligand>
        <name>substrate</name>
    </ligand>
</feature>
<feature type="binding site" evidence="1">
    <location>
        <position position="169"/>
    </location>
    <ligand>
        <name>substrate</name>
    </ligand>
</feature>
<feature type="binding site" evidence="1">
    <location>
        <position position="169"/>
    </location>
    <ligand>
        <name>Zn(2+)</name>
        <dbReference type="ChEBI" id="CHEBI:29105"/>
    </ligand>
</feature>
<feature type="binding site" evidence="1">
    <location>
        <position position="177"/>
    </location>
    <ligand>
        <name>Zn(2+)</name>
        <dbReference type="ChEBI" id="CHEBI:29105"/>
    </ligand>
</feature>
<evidence type="ECO:0000255" key="1">
    <source>
        <dbReference type="HAMAP-Rule" id="MF_00067"/>
    </source>
</evidence>
<name>GMHA_GEOSL</name>
<accession>Q74BF4</accession>